<keyword id="KW-0423">Lactose metabolism</keyword>
<keyword id="KW-0456">Lyase</keyword>
<organism>
    <name type="scientific">Streptococcus pyogenes serotype M3 (strain SSI-1)</name>
    <dbReference type="NCBI Taxonomy" id="193567"/>
    <lineage>
        <taxon>Bacteria</taxon>
        <taxon>Bacillati</taxon>
        <taxon>Bacillota</taxon>
        <taxon>Bacilli</taxon>
        <taxon>Lactobacillales</taxon>
        <taxon>Streptococcaceae</taxon>
        <taxon>Streptococcus</taxon>
    </lineage>
</organism>
<name>LACD2_STRPQ</name>
<sequence>MTITLTENKRKSMEKLSVDGVISALAFDQRGALKRMMAQHQTKEPTVEQIEELKSLVSEELTPFASSILLDPEYGLPASRVRSEEAGLLLAYEKTGYDATTTSRLPDCLDVWSAKRIKEAGAEAVKFLIYYDIDGGQDVNEQKKAYIERIGSECRAEDIPFYLEILTYDEKIADNASPEFAKVKAHKVNEAMKVFSKERFGVDVLKVEVPVNMKFVEGFADGEILFTKEEAAQAFRDQEASTDLPYIYLSAGVSAKLFQDTLVFAAESGAKFNGVLCGRATWAGSVKVYIEEGPQAAREWLRTEGFKNIDELNKVLDKTASPWTEKM</sequence>
<dbReference type="EC" id="4.1.2.40"/>
<dbReference type="EMBL" id="BA000034">
    <property type="protein sequence ID" value="BAC64749.1"/>
    <property type="molecule type" value="Genomic_DNA"/>
</dbReference>
<dbReference type="SMR" id="P0DC17"/>
<dbReference type="KEGG" id="sps:SPs1654"/>
<dbReference type="HOGENOM" id="CLU_058971_0_1_9"/>
<dbReference type="UniPathway" id="UPA00704">
    <property type="reaction ID" value="UER00716"/>
</dbReference>
<dbReference type="GO" id="GO:0061595">
    <property type="term" value="F:6-deoxy-6-sulfofructose-1-phosphate aldolase activity"/>
    <property type="evidence" value="ECO:0007669"/>
    <property type="project" value="TreeGrafter"/>
</dbReference>
<dbReference type="GO" id="GO:0009024">
    <property type="term" value="F:tagatose-6-phosphate kinase activity"/>
    <property type="evidence" value="ECO:0007669"/>
    <property type="project" value="InterPro"/>
</dbReference>
<dbReference type="GO" id="GO:0009025">
    <property type="term" value="F:tagatose-bisphosphate aldolase activity"/>
    <property type="evidence" value="ECO:0007669"/>
    <property type="project" value="UniProtKB-UniRule"/>
</dbReference>
<dbReference type="GO" id="GO:1902777">
    <property type="term" value="P:6-sulfoquinovose(1-) catabolic process"/>
    <property type="evidence" value="ECO:0007669"/>
    <property type="project" value="TreeGrafter"/>
</dbReference>
<dbReference type="GO" id="GO:2001059">
    <property type="term" value="P:D-tagatose 6-phosphate catabolic process"/>
    <property type="evidence" value="ECO:0007669"/>
    <property type="project" value="UniProtKB-UniRule"/>
</dbReference>
<dbReference type="GO" id="GO:0019512">
    <property type="term" value="P:lactose catabolic process via tagatose-6-phosphate"/>
    <property type="evidence" value="ECO:0007669"/>
    <property type="project" value="InterPro"/>
</dbReference>
<dbReference type="FunFam" id="3.20.20.70:FF:000137">
    <property type="entry name" value="Tagatose 1,6-diphosphate aldolase 2"/>
    <property type="match status" value="1"/>
</dbReference>
<dbReference type="Gene3D" id="3.20.20.70">
    <property type="entry name" value="Aldolase class I"/>
    <property type="match status" value="1"/>
</dbReference>
<dbReference type="HAMAP" id="MF_00734">
    <property type="entry name" value="LacD"/>
    <property type="match status" value="1"/>
</dbReference>
<dbReference type="InterPro" id="IPR013785">
    <property type="entry name" value="Aldolase_TIM"/>
</dbReference>
<dbReference type="InterPro" id="IPR002915">
    <property type="entry name" value="DeoC/FbaB/LacD_aldolase"/>
</dbReference>
<dbReference type="InterPro" id="IPR050552">
    <property type="entry name" value="LacD_aldolase"/>
</dbReference>
<dbReference type="InterPro" id="IPR005927">
    <property type="entry name" value="Tag_1.6-dipho_adolase"/>
</dbReference>
<dbReference type="NCBIfam" id="TIGR01232">
    <property type="entry name" value="lacD"/>
    <property type="match status" value="1"/>
</dbReference>
<dbReference type="NCBIfam" id="NF003180">
    <property type="entry name" value="PRK04161.1"/>
    <property type="match status" value="1"/>
</dbReference>
<dbReference type="NCBIfam" id="NF009065">
    <property type="entry name" value="PRK12399.1"/>
    <property type="match status" value="1"/>
</dbReference>
<dbReference type="NCBIfam" id="NF009498">
    <property type="entry name" value="PRK12858.1"/>
    <property type="match status" value="1"/>
</dbReference>
<dbReference type="PANTHER" id="PTHR39340">
    <property type="entry name" value="SULFOFRUCTOSEPHOSPHATE ALDOLASE"/>
    <property type="match status" value="1"/>
</dbReference>
<dbReference type="PANTHER" id="PTHR39340:SF1">
    <property type="entry name" value="SULFOFRUCTOSEPHOSPHATE ALDOLASE"/>
    <property type="match status" value="1"/>
</dbReference>
<dbReference type="Pfam" id="PF01791">
    <property type="entry name" value="DeoC"/>
    <property type="match status" value="1"/>
</dbReference>
<dbReference type="SMART" id="SM01133">
    <property type="entry name" value="DeoC"/>
    <property type="match status" value="1"/>
</dbReference>
<dbReference type="SUPFAM" id="SSF51569">
    <property type="entry name" value="Aldolase"/>
    <property type="match status" value="1"/>
</dbReference>
<proteinExistence type="inferred from homology"/>
<accession>P0DC17</accession>
<accession>Q8K5U9</accession>
<evidence type="ECO:0000305" key="1"/>
<gene>
    <name type="primary">lacD2</name>
    <name type="synonym">lacD.2</name>
    <name type="ordered locus">SPs1654</name>
</gene>
<reference key="1">
    <citation type="journal article" date="2003" name="Genome Res.">
        <title>Genome sequence of an M3 strain of Streptococcus pyogenes reveals a large-scale genomic rearrangement in invasive strains and new insights into phage evolution.</title>
        <authorList>
            <person name="Nakagawa I."/>
            <person name="Kurokawa K."/>
            <person name="Yamashita A."/>
            <person name="Nakata M."/>
            <person name="Tomiyasu Y."/>
            <person name="Okahashi N."/>
            <person name="Kawabata S."/>
            <person name="Yamazaki K."/>
            <person name="Shiba T."/>
            <person name="Yasunaga T."/>
            <person name="Hayashi H."/>
            <person name="Hattori M."/>
            <person name="Hamada S."/>
        </authorList>
    </citation>
    <scope>NUCLEOTIDE SEQUENCE [LARGE SCALE GENOMIC DNA]</scope>
    <source>
        <strain>SSI-1</strain>
    </source>
</reference>
<protein>
    <recommendedName>
        <fullName>Tagatose 1,6-diphosphate aldolase 2</fullName>
        <ecNumber>4.1.2.40</ecNumber>
    </recommendedName>
    <alternativeName>
        <fullName>D-tagatose-1,6-bisphosphate aldolase 2</fullName>
    </alternativeName>
    <alternativeName>
        <fullName>Tagatose-bisphosphate aldolase 2</fullName>
    </alternativeName>
</protein>
<comment type="catalytic activity">
    <reaction>
        <text>D-tagatofuranose 1,6-bisphosphate = D-glyceraldehyde 3-phosphate + dihydroxyacetone phosphate</text>
        <dbReference type="Rhea" id="RHEA:22948"/>
        <dbReference type="ChEBI" id="CHEBI:57642"/>
        <dbReference type="ChEBI" id="CHEBI:58694"/>
        <dbReference type="ChEBI" id="CHEBI:59776"/>
        <dbReference type="EC" id="4.1.2.40"/>
    </reaction>
</comment>
<comment type="pathway">
    <text>Carbohydrate metabolism; D-tagatose 6-phosphate degradation; D-glyceraldehyde 3-phosphate and glycerone phosphate from D-tagatose 6-phosphate: step 2/2.</text>
</comment>
<comment type="similarity">
    <text evidence="1">Belongs to the aldolase LacD family.</text>
</comment>
<feature type="chain" id="PRO_0000411396" description="Tagatose 1,6-diphosphate aldolase 2">
    <location>
        <begin position="1"/>
        <end position="327"/>
    </location>
</feature>